<feature type="chain" id="PRO_1000032057" description="Elongation factor 4">
    <location>
        <begin position="1"/>
        <end position="604"/>
    </location>
</feature>
<feature type="domain" description="tr-type G">
    <location>
        <begin position="4"/>
        <end position="186"/>
    </location>
</feature>
<feature type="binding site" evidence="1">
    <location>
        <begin position="16"/>
        <end position="21"/>
    </location>
    <ligand>
        <name>GTP</name>
        <dbReference type="ChEBI" id="CHEBI:37565"/>
    </ligand>
</feature>
<feature type="binding site" evidence="1">
    <location>
        <begin position="133"/>
        <end position="136"/>
    </location>
    <ligand>
        <name>GTP</name>
        <dbReference type="ChEBI" id="CHEBI:37565"/>
    </ligand>
</feature>
<accession>Q01SV7</accession>
<reference key="1">
    <citation type="journal article" date="2009" name="Appl. Environ. Microbiol.">
        <title>Three genomes from the phylum Acidobacteria provide insight into the lifestyles of these microorganisms in soils.</title>
        <authorList>
            <person name="Ward N.L."/>
            <person name="Challacombe J.F."/>
            <person name="Janssen P.H."/>
            <person name="Henrissat B."/>
            <person name="Coutinho P.M."/>
            <person name="Wu M."/>
            <person name="Xie G."/>
            <person name="Haft D.H."/>
            <person name="Sait M."/>
            <person name="Badger J."/>
            <person name="Barabote R.D."/>
            <person name="Bradley B."/>
            <person name="Brettin T.S."/>
            <person name="Brinkac L.M."/>
            <person name="Bruce D."/>
            <person name="Creasy T."/>
            <person name="Daugherty S.C."/>
            <person name="Davidsen T.M."/>
            <person name="DeBoy R.T."/>
            <person name="Detter J.C."/>
            <person name="Dodson R.J."/>
            <person name="Durkin A.S."/>
            <person name="Ganapathy A."/>
            <person name="Gwinn-Giglio M."/>
            <person name="Han C.S."/>
            <person name="Khouri H."/>
            <person name="Kiss H."/>
            <person name="Kothari S.P."/>
            <person name="Madupu R."/>
            <person name="Nelson K.E."/>
            <person name="Nelson W.C."/>
            <person name="Paulsen I."/>
            <person name="Penn K."/>
            <person name="Ren Q."/>
            <person name="Rosovitz M.J."/>
            <person name="Selengut J.D."/>
            <person name="Shrivastava S."/>
            <person name="Sullivan S.A."/>
            <person name="Tapia R."/>
            <person name="Thompson L.S."/>
            <person name="Watkins K.L."/>
            <person name="Yang Q."/>
            <person name="Yu C."/>
            <person name="Zafar N."/>
            <person name="Zhou L."/>
            <person name="Kuske C.R."/>
        </authorList>
    </citation>
    <scope>NUCLEOTIDE SEQUENCE [LARGE SCALE GENOMIC DNA]</scope>
    <source>
        <strain>Ellin6076</strain>
    </source>
</reference>
<organism>
    <name type="scientific">Solibacter usitatus (strain Ellin6076)</name>
    <dbReference type="NCBI Taxonomy" id="234267"/>
    <lineage>
        <taxon>Bacteria</taxon>
        <taxon>Pseudomonadati</taxon>
        <taxon>Acidobacteriota</taxon>
        <taxon>Terriglobia</taxon>
        <taxon>Bryobacterales</taxon>
        <taxon>Solibacteraceae</taxon>
        <taxon>Candidatus Solibacter</taxon>
    </lineage>
</organism>
<sequence length="604" mass="67243">MDREFIRNFSIIAHIDHGKSTLADRLLEVTGALSQREMMEQVLDSMDLERERGITIKAHAVRLNYRADDGKLYQLNLIDTPGHVDFSYEVSRSLQACEGALLVVDASQGVEAQTLANTYLALHHNLEIIPVINKIDLPAAEPERIREQIETVVGIDARDAVLCSAKQGVGIHDILEAIVHLVPPPKGSPDAPLRALIFDSWFDSYRGVIILMRIIDGRMKLGQKIKLMANGQVFEVEGLGYQAPKATACSELQAGEVGFLYANIKTVGDAKIGDTITEVENPATEPLPGFEEIKPMVFAGLYPVESHEHGLLRDALEKLRLNDSAFNFEPENSAALGFGFRCGFLGLLHLEIVQERLEREFNIDLITTAPGVRYRITDTSGNLVEVDNPTKFPDPSYIETIEEPIIDASVITREDFLGGILALLEEKRGTQKKFEHIGAGRVMLTYELPLNEIVLDFYDRLKSASKGYASLDYHLSGYRESPMVKLDVLVAGEPVDALSIIVHKDFAFERGKALISRLRKLIPKQMFEVALQAAIGNKIVARETISAMRKNVIAKCYGGDISRKRKLLEKQKEGKKRMKRVGRVEIPQEAFLSVLKVSQSSDDD</sequence>
<protein>
    <recommendedName>
        <fullName evidence="1">Elongation factor 4</fullName>
        <shortName evidence="1">EF-4</shortName>
        <ecNumber evidence="1">3.6.5.n1</ecNumber>
    </recommendedName>
    <alternativeName>
        <fullName evidence="1">Ribosomal back-translocase LepA</fullName>
    </alternativeName>
</protein>
<comment type="function">
    <text evidence="1">Required for accurate and efficient protein synthesis under certain stress conditions. May act as a fidelity factor of the translation reaction, by catalyzing a one-codon backward translocation of tRNAs on improperly translocated ribosomes. Back-translocation proceeds from a post-translocation (POST) complex to a pre-translocation (PRE) complex, thus giving elongation factor G a second chance to translocate the tRNAs correctly. Binds to ribosomes in a GTP-dependent manner.</text>
</comment>
<comment type="catalytic activity">
    <reaction evidence="1">
        <text>GTP + H2O = GDP + phosphate + H(+)</text>
        <dbReference type="Rhea" id="RHEA:19669"/>
        <dbReference type="ChEBI" id="CHEBI:15377"/>
        <dbReference type="ChEBI" id="CHEBI:15378"/>
        <dbReference type="ChEBI" id="CHEBI:37565"/>
        <dbReference type="ChEBI" id="CHEBI:43474"/>
        <dbReference type="ChEBI" id="CHEBI:58189"/>
        <dbReference type="EC" id="3.6.5.n1"/>
    </reaction>
</comment>
<comment type="subcellular location">
    <subcellularLocation>
        <location evidence="1">Cell inner membrane</location>
        <topology evidence="1">Peripheral membrane protein</topology>
        <orientation evidence="1">Cytoplasmic side</orientation>
    </subcellularLocation>
</comment>
<comment type="similarity">
    <text evidence="1">Belongs to the TRAFAC class translation factor GTPase superfamily. Classic translation factor GTPase family. LepA subfamily.</text>
</comment>
<dbReference type="EC" id="3.6.5.n1" evidence="1"/>
<dbReference type="EMBL" id="CP000473">
    <property type="protein sequence ID" value="ABJ87263.1"/>
    <property type="molecule type" value="Genomic_DNA"/>
</dbReference>
<dbReference type="SMR" id="Q01SV7"/>
<dbReference type="FunCoup" id="Q01SV7">
    <property type="interactions" value="696"/>
</dbReference>
<dbReference type="STRING" id="234267.Acid_6337"/>
<dbReference type="KEGG" id="sus:Acid_6337"/>
<dbReference type="eggNOG" id="COG0481">
    <property type="taxonomic scope" value="Bacteria"/>
</dbReference>
<dbReference type="HOGENOM" id="CLU_009995_3_3_0"/>
<dbReference type="InParanoid" id="Q01SV7"/>
<dbReference type="OrthoDB" id="9804431at2"/>
<dbReference type="GO" id="GO:0005886">
    <property type="term" value="C:plasma membrane"/>
    <property type="evidence" value="ECO:0007669"/>
    <property type="project" value="UniProtKB-SubCell"/>
</dbReference>
<dbReference type="GO" id="GO:0005525">
    <property type="term" value="F:GTP binding"/>
    <property type="evidence" value="ECO:0007669"/>
    <property type="project" value="UniProtKB-UniRule"/>
</dbReference>
<dbReference type="GO" id="GO:0003924">
    <property type="term" value="F:GTPase activity"/>
    <property type="evidence" value="ECO:0007669"/>
    <property type="project" value="UniProtKB-UniRule"/>
</dbReference>
<dbReference type="GO" id="GO:0043022">
    <property type="term" value="F:ribosome binding"/>
    <property type="evidence" value="ECO:0007669"/>
    <property type="project" value="UniProtKB-UniRule"/>
</dbReference>
<dbReference type="GO" id="GO:0003746">
    <property type="term" value="F:translation elongation factor activity"/>
    <property type="evidence" value="ECO:0007669"/>
    <property type="project" value="UniProtKB-UniRule"/>
</dbReference>
<dbReference type="GO" id="GO:0045727">
    <property type="term" value="P:positive regulation of translation"/>
    <property type="evidence" value="ECO:0007669"/>
    <property type="project" value="UniProtKB-UniRule"/>
</dbReference>
<dbReference type="CDD" id="cd03699">
    <property type="entry name" value="EF4_II"/>
    <property type="match status" value="1"/>
</dbReference>
<dbReference type="CDD" id="cd16260">
    <property type="entry name" value="EF4_III"/>
    <property type="match status" value="1"/>
</dbReference>
<dbReference type="CDD" id="cd01890">
    <property type="entry name" value="LepA"/>
    <property type="match status" value="1"/>
</dbReference>
<dbReference type="CDD" id="cd03709">
    <property type="entry name" value="lepA_C"/>
    <property type="match status" value="1"/>
</dbReference>
<dbReference type="FunFam" id="3.40.50.300:FF:000078">
    <property type="entry name" value="Elongation factor 4"/>
    <property type="match status" value="1"/>
</dbReference>
<dbReference type="FunFam" id="2.40.30.10:FF:000015">
    <property type="entry name" value="Translation factor GUF1, mitochondrial"/>
    <property type="match status" value="1"/>
</dbReference>
<dbReference type="FunFam" id="3.30.70.240:FF:000007">
    <property type="entry name" value="Translation factor GUF1, mitochondrial"/>
    <property type="match status" value="1"/>
</dbReference>
<dbReference type="FunFam" id="3.30.70.2570:FF:000001">
    <property type="entry name" value="Translation factor GUF1, mitochondrial"/>
    <property type="match status" value="1"/>
</dbReference>
<dbReference type="FunFam" id="3.30.70.870:FF:000004">
    <property type="entry name" value="Translation factor GUF1, mitochondrial"/>
    <property type="match status" value="1"/>
</dbReference>
<dbReference type="Gene3D" id="3.30.70.240">
    <property type="match status" value="1"/>
</dbReference>
<dbReference type="Gene3D" id="3.30.70.2570">
    <property type="entry name" value="Elongation factor 4, C-terminal domain"/>
    <property type="match status" value="1"/>
</dbReference>
<dbReference type="Gene3D" id="3.30.70.870">
    <property type="entry name" value="Elongation Factor G (Translational Gtpase), domain 3"/>
    <property type="match status" value="1"/>
</dbReference>
<dbReference type="Gene3D" id="3.40.50.300">
    <property type="entry name" value="P-loop containing nucleotide triphosphate hydrolases"/>
    <property type="match status" value="1"/>
</dbReference>
<dbReference type="Gene3D" id="2.40.30.10">
    <property type="entry name" value="Translation factors"/>
    <property type="match status" value="1"/>
</dbReference>
<dbReference type="HAMAP" id="MF_00071">
    <property type="entry name" value="LepA"/>
    <property type="match status" value="1"/>
</dbReference>
<dbReference type="InterPro" id="IPR006297">
    <property type="entry name" value="EF-4"/>
</dbReference>
<dbReference type="InterPro" id="IPR035647">
    <property type="entry name" value="EFG_III/V"/>
</dbReference>
<dbReference type="InterPro" id="IPR000640">
    <property type="entry name" value="EFG_V-like"/>
</dbReference>
<dbReference type="InterPro" id="IPR004161">
    <property type="entry name" value="EFTu-like_2"/>
</dbReference>
<dbReference type="InterPro" id="IPR038363">
    <property type="entry name" value="LepA_C_sf"/>
</dbReference>
<dbReference type="InterPro" id="IPR013842">
    <property type="entry name" value="LepA_CTD"/>
</dbReference>
<dbReference type="InterPro" id="IPR035654">
    <property type="entry name" value="LepA_IV"/>
</dbReference>
<dbReference type="InterPro" id="IPR027417">
    <property type="entry name" value="P-loop_NTPase"/>
</dbReference>
<dbReference type="InterPro" id="IPR005225">
    <property type="entry name" value="Small_GTP-bd"/>
</dbReference>
<dbReference type="InterPro" id="IPR000795">
    <property type="entry name" value="T_Tr_GTP-bd_dom"/>
</dbReference>
<dbReference type="InterPro" id="IPR009000">
    <property type="entry name" value="Transl_B-barrel_sf"/>
</dbReference>
<dbReference type="NCBIfam" id="TIGR01393">
    <property type="entry name" value="lepA"/>
    <property type="match status" value="1"/>
</dbReference>
<dbReference type="NCBIfam" id="TIGR00231">
    <property type="entry name" value="small_GTP"/>
    <property type="match status" value="1"/>
</dbReference>
<dbReference type="PANTHER" id="PTHR43512:SF4">
    <property type="entry name" value="TRANSLATION FACTOR GUF1 HOMOLOG, CHLOROPLASTIC"/>
    <property type="match status" value="1"/>
</dbReference>
<dbReference type="PANTHER" id="PTHR43512">
    <property type="entry name" value="TRANSLATION FACTOR GUF1-RELATED"/>
    <property type="match status" value="1"/>
</dbReference>
<dbReference type="Pfam" id="PF00679">
    <property type="entry name" value="EFG_C"/>
    <property type="match status" value="1"/>
</dbReference>
<dbReference type="Pfam" id="PF00009">
    <property type="entry name" value="GTP_EFTU"/>
    <property type="match status" value="1"/>
</dbReference>
<dbReference type="Pfam" id="PF03144">
    <property type="entry name" value="GTP_EFTU_D2"/>
    <property type="match status" value="1"/>
</dbReference>
<dbReference type="Pfam" id="PF06421">
    <property type="entry name" value="LepA_C"/>
    <property type="match status" value="1"/>
</dbReference>
<dbReference type="PRINTS" id="PR00315">
    <property type="entry name" value="ELONGATNFCT"/>
</dbReference>
<dbReference type="SUPFAM" id="SSF54980">
    <property type="entry name" value="EF-G C-terminal domain-like"/>
    <property type="match status" value="2"/>
</dbReference>
<dbReference type="SUPFAM" id="SSF52540">
    <property type="entry name" value="P-loop containing nucleoside triphosphate hydrolases"/>
    <property type="match status" value="1"/>
</dbReference>
<dbReference type="SUPFAM" id="SSF50447">
    <property type="entry name" value="Translation proteins"/>
    <property type="match status" value="1"/>
</dbReference>
<dbReference type="PROSITE" id="PS51722">
    <property type="entry name" value="G_TR_2"/>
    <property type="match status" value="1"/>
</dbReference>
<proteinExistence type="inferred from homology"/>
<keyword id="KW-0997">Cell inner membrane</keyword>
<keyword id="KW-1003">Cell membrane</keyword>
<keyword id="KW-0342">GTP-binding</keyword>
<keyword id="KW-0378">Hydrolase</keyword>
<keyword id="KW-0472">Membrane</keyword>
<keyword id="KW-0547">Nucleotide-binding</keyword>
<keyword id="KW-0648">Protein biosynthesis</keyword>
<evidence type="ECO:0000255" key="1">
    <source>
        <dbReference type="HAMAP-Rule" id="MF_00071"/>
    </source>
</evidence>
<gene>
    <name evidence="1" type="primary">lepA</name>
    <name type="ordered locus">Acid_6337</name>
</gene>
<name>LEPA_SOLUE</name>